<feature type="chain" id="PRO_0000317926" description="Autophagy-related protein 11">
    <location>
        <begin position="1"/>
        <end position="1219"/>
    </location>
</feature>
<feature type="region of interest" description="Disordered" evidence="3">
    <location>
        <begin position="811"/>
        <end position="882"/>
    </location>
</feature>
<feature type="region of interest" description="Disordered" evidence="3">
    <location>
        <begin position="895"/>
        <end position="926"/>
    </location>
</feature>
<feature type="coiled-coil region" evidence="2">
    <location>
        <begin position="636"/>
        <end position="824"/>
    </location>
</feature>
<feature type="coiled-coil region" evidence="2">
    <location>
        <begin position="1052"/>
        <end position="1081"/>
    </location>
</feature>
<feature type="compositionally biased region" description="Polar residues" evidence="3">
    <location>
        <begin position="818"/>
        <end position="830"/>
    </location>
</feature>
<feature type="compositionally biased region" description="Low complexity" evidence="3">
    <location>
        <begin position="831"/>
        <end position="863"/>
    </location>
</feature>
<feature type="compositionally biased region" description="Basic and acidic residues" evidence="3">
    <location>
        <begin position="864"/>
        <end position="877"/>
    </location>
</feature>
<feature type="compositionally biased region" description="Polar residues" evidence="3">
    <location>
        <begin position="909"/>
        <end position="925"/>
    </location>
</feature>
<proteinExistence type="inferred from homology"/>
<accession>A7TL57</accession>
<comment type="function">
    <text evidence="1">Involved in cytoplasm to vacuole transport (Cvt), pexophagy, mitophagy and nucleophagy. Recruits mitochondria for their selective degradation via autophagy (mitophagy) during starvation. Works as scaffold proteins that recruit ATG proteins to the pre-autophagosome (PAS), the site of vesicle/autophagosome formation. Required for the Cvt vesicles completion (By similarity).</text>
</comment>
<comment type="subunit">
    <text evidence="1">Homodimer.</text>
</comment>
<comment type="subcellular location">
    <subcellularLocation>
        <location evidence="1">Preautophagosomal structure membrane</location>
        <topology evidence="1">Peripheral membrane protein</topology>
    </subcellularLocation>
    <subcellularLocation>
        <location evidence="1">Vacuole membrane</location>
        <topology evidence="1">Peripheral membrane protein</topology>
    </subcellularLocation>
    <text evidence="1">During pexophagy, accumulates in the vacuolar membrane region, where the peroxisomes contact the vacuole.</text>
</comment>
<comment type="similarity">
    <text evidence="4">Belongs to the ATG11 family.</text>
</comment>
<reference key="1">
    <citation type="journal article" date="2007" name="Proc. Natl. Acad. Sci. U.S.A.">
        <title>Independent sorting-out of thousands of duplicated gene pairs in two yeast species descended from a whole-genome duplication.</title>
        <authorList>
            <person name="Scannell D.R."/>
            <person name="Frank A.C."/>
            <person name="Conant G.C."/>
            <person name="Byrne K.P."/>
            <person name="Woolfit M."/>
            <person name="Wolfe K.H."/>
        </authorList>
    </citation>
    <scope>NUCLEOTIDE SEQUENCE [LARGE SCALE GENOMIC DNA]</scope>
    <source>
        <strain>ATCC 22028 / DSM 70294 / BCRC 21397 / CBS 2163 / NBRC 10782 / NRRL Y-8283 / UCD 57-17</strain>
    </source>
</reference>
<dbReference type="EMBL" id="DS480412">
    <property type="protein sequence ID" value="EDO17020.1"/>
    <property type="molecule type" value="Genomic_DNA"/>
</dbReference>
<dbReference type="RefSeq" id="XP_001644878.1">
    <property type="nucleotide sequence ID" value="XM_001644828.1"/>
</dbReference>
<dbReference type="SMR" id="A7TL57"/>
<dbReference type="FunCoup" id="A7TL57">
    <property type="interactions" value="179"/>
</dbReference>
<dbReference type="STRING" id="436907.A7TL57"/>
<dbReference type="GeneID" id="5545192"/>
<dbReference type="KEGG" id="vpo:Kpol_1065p36"/>
<dbReference type="eggNOG" id="ENOG502QVZE">
    <property type="taxonomic scope" value="Eukaryota"/>
</dbReference>
<dbReference type="HOGENOM" id="CLU_272501_0_0_1"/>
<dbReference type="InParanoid" id="A7TL57"/>
<dbReference type="OMA" id="EIDVHYF"/>
<dbReference type="OrthoDB" id="447953at2759"/>
<dbReference type="Proteomes" id="UP000000267">
    <property type="component" value="Unassembled WGS sequence"/>
</dbReference>
<dbReference type="GO" id="GO:1990316">
    <property type="term" value="C:Atg1/ULK1 kinase complex"/>
    <property type="evidence" value="ECO:0007669"/>
    <property type="project" value="TreeGrafter"/>
</dbReference>
<dbReference type="GO" id="GO:0034045">
    <property type="term" value="C:phagophore assembly site membrane"/>
    <property type="evidence" value="ECO:0007669"/>
    <property type="project" value="UniProtKB-SubCell"/>
</dbReference>
<dbReference type="GO" id="GO:0005774">
    <property type="term" value="C:vacuolar membrane"/>
    <property type="evidence" value="ECO:0007669"/>
    <property type="project" value="UniProtKB-SubCell"/>
</dbReference>
<dbReference type="GO" id="GO:0060090">
    <property type="term" value="F:molecular adaptor activity"/>
    <property type="evidence" value="ECO:0007669"/>
    <property type="project" value="EnsemblFungi"/>
</dbReference>
<dbReference type="GO" id="GO:0019901">
    <property type="term" value="F:protein kinase binding"/>
    <property type="evidence" value="ECO:0007669"/>
    <property type="project" value="TreeGrafter"/>
</dbReference>
<dbReference type="GO" id="GO:0000149">
    <property type="term" value="F:SNARE binding"/>
    <property type="evidence" value="ECO:0007669"/>
    <property type="project" value="EnsemblFungi"/>
</dbReference>
<dbReference type="GO" id="GO:0000422">
    <property type="term" value="P:autophagy of mitochondrion"/>
    <property type="evidence" value="ECO:0007669"/>
    <property type="project" value="EnsemblFungi"/>
</dbReference>
<dbReference type="GO" id="GO:0006995">
    <property type="term" value="P:cellular response to nitrogen starvation"/>
    <property type="evidence" value="ECO:0007669"/>
    <property type="project" value="EnsemblFungi"/>
</dbReference>
<dbReference type="GO" id="GO:0032258">
    <property type="term" value="P:cytoplasm to vacuole targeting by the Cvt pathway"/>
    <property type="evidence" value="ECO:0007669"/>
    <property type="project" value="EnsemblFungi"/>
</dbReference>
<dbReference type="GO" id="GO:0000425">
    <property type="term" value="P:pexophagy"/>
    <property type="evidence" value="ECO:0007669"/>
    <property type="project" value="EnsemblFungi"/>
</dbReference>
<dbReference type="GO" id="GO:0034727">
    <property type="term" value="P:piecemeal microautophagy of the nucleus"/>
    <property type="evidence" value="ECO:0007669"/>
    <property type="project" value="EnsemblFungi"/>
</dbReference>
<dbReference type="GO" id="GO:2000786">
    <property type="term" value="P:positive regulation of autophagosome assembly"/>
    <property type="evidence" value="ECO:0007669"/>
    <property type="project" value="EnsemblFungi"/>
</dbReference>
<dbReference type="GO" id="GO:0034497">
    <property type="term" value="P:protein localization to phagophore assembly site"/>
    <property type="evidence" value="ECO:0007669"/>
    <property type="project" value="EnsemblFungi"/>
</dbReference>
<dbReference type="GO" id="GO:0031503">
    <property type="term" value="P:protein-containing complex localization"/>
    <property type="evidence" value="ECO:0007669"/>
    <property type="project" value="EnsemblFungi"/>
</dbReference>
<dbReference type="GO" id="GO:0061709">
    <property type="term" value="P:reticulophagy"/>
    <property type="evidence" value="ECO:0007669"/>
    <property type="project" value="EnsemblFungi"/>
</dbReference>
<dbReference type="GO" id="GO:0034517">
    <property type="term" value="P:ribophagy"/>
    <property type="evidence" value="ECO:0007669"/>
    <property type="project" value="EnsemblFungi"/>
</dbReference>
<dbReference type="InterPro" id="IPR040040">
    <property type="entry name" value="ATG11"/>
</dbReference>
<dbReference type="InterPro" id="IPR019460">
    <property type="entry name" value="Atg11_C"/>
</dbReference>
<dbReference type="InterPro" id="IPR045326">
    <property type="entry name" value="ATG17-like_dom"/>
</dbReference>
<dbReference type="PANTHER" id="PTHR13222">
    <property type="entry name" value="RB1-INDUCIBLE COILED-COIL"/>
    <property type="match status" value="1"/>
</dbReference>
<dbReference type="PANTHER" id="PTHR13222:SF1">
    <property type="entry name" value="RB1-INDUCIBLE COILED-COIL PROTEIN 1"/>
    <property type="match status" value="1"/>
</dbReference>
<dbReference type="Pfam" id="PF10377">
    <property type="entry name" value="ATG11"/>
    <property type="match status" value="1"/>
</dbReference>
<dbReference type="Pfam" id="PF04108">
    <property type="entry name" value="ATG17_like"/>
    <property type="match status" value="1"/>
</dbReference>
<protein>
    <recommendedName>
        <fullName>Autophagy-related protein 11</fullName>
    </recommendedName>
</protein>
<organism>
    <name type="scientific">Vanderwaltozyma polyspora (strain ATCC 22028 / DSM 70294 / BCRC 21397 / CBS 2163 / NBRC 10782 / NRRL Y-8283 / UCD 57-17)</name>
    <name type="common">Kluyveromyces polysporus</name>
    <dbReference type="NCBI Taxonomy" id="436907"/>
    <lineage>
        <taxon>Eukaryota</taxon>
        <taxon>Fungi</taxon>
        <taxon>Dikarya</taxon>
        <taxon>Ascomycota</taxon>
        <taxon>Saccharomycotina</taxon>
        <taxon>Saccharomycetes</taxon>
        <taxon>Saccharomycetales</taxon>
        <taxon>Saccharomycetaceae</taxon>
        <taxon>Vanderwaltozyma</taxon>
    </lineage>
</organism>
<sequence>MSSNIINAITGELITIDITLFISLNEFKKFLINRWQIDFNNLLLLLPFGNKINDRIFIDLIGKKNDQSTIYVFDRRLFSLVNNPDNELSSDYLTNIKNLLKGINHPTNNLNQLVKPVNSPYEEVEINEKFLNYHTITSLITTNLGWLSALEIDMHYFQIQISDTLDYIKNIIESLKICQNYLELYCYDVENLYNSNVKFLNQLANNEILKNWLNYYDNILTKLSDINGNKLSSYLNKNELVSISSKIEELDQRVNSNLKKFKIVIDKNIDLRNNINKEISSLSEKITPSSEKYKLEETMLEKFTELVKNLRNDSKVILEKDENEFDKNYMQNLAKSLEKDKKVTVTNLLTISKALYSQANDISEIKSKLQVDSIKLFGQISFIQIETLNIKKLLLNELNKDLEKYQGFELKLAHVQDIPLVYGLYSIENYRRESWVLQINYKHLDFNKSLKTIVEKEKSTRNKWVDNFGSTAVYFTEDMDTLRDFNYLNNIAKGNQSMIKKLEELFKNISNESHNKNLVFIETYIKEVEDLDLDKDVIELFKRYLAVAQGFVIEQPSTKNIISDKETGELINGYQSRIKKLELLLHSARYSNVESWPTGLLNYSNVKLFRNNVATVNSKLSLQSDYMGNISYGSDQLRIKELENVNKQYKTDFKALTDENKLLKDKVTKFNTDISDIQIERNAYKETLTKLNEELSRLTSIEGDFEKHKGEKEIELKIKIDGLVDSNKTLLNQISDLKIESKELESSNRDLLAQLNQKREEHKVLEDSLKQRENEGLRYKDEYEAKLKELTEKFEADRRALEDEIKAAKEQNMKESMEQQTEQSANQSIDQSIEQSTEQSTEQSTEQSMEQSMEQSMEQSVEQSMEHSMEHSMEQSEKQNMGQNDATIDNQSIETPTSEDMHSLDEQSPESQLLKSNTTELQPIKSQELAEDSKAIELKNIQEMLVSKLYEIFSSNVFILENIGLLLTFDEHDNFQIRRVKGLKKNLNQSVLEETGLLNEIEMPVKSDVFSEVKTLFSNYKETFDSRSYISLLSKINQLYDCKLYETAVIKRFEDIELLAKKLAKENKAKKNLFEKYRCERITLKNFEVGDLALFLPTRENCITEDVSVASWNSSFSSVDLSTPPPFGEPITNQSHSGTAKDKNKHNLEKRPWAAFTAFEETARYFLKDPENIPNNREWFVGKIMHLQRFVVEDHISNPYKLPKGAVWFQVTATVVSHQ</sequence>
<keyword id="KW-0072">Autophagy</keyword>
<keyword id="KW-0175">Coiled coil</keyword>
<keyword id="KW-0472">Membrane</keyword>
<keyword id="KW-0653">Protein transport</keyword>
<keyword id="KW-1185">Reference proteome</keyword>
<keyword id="KW-0813">Transport</keyword>
<keyword id="KW-0926">Vacuole</keyword>
<evidence type="ECO:0000250" key="1"/>
<evidence type="ECO:0000255" key="2"/>
<evidence type="ECO:0000256" key="3">
    <source>
        <dbReference type="SAM" id="MobiDB-lite"/>
    </source>
</evidence>
<evidence type="ECO:0000305" key="4"/>
<name>ATG11_VANPO</name>
<gene>
    <name type="primary">ATG11</name>
    <name type="ORF">Kpol_1065p36</name>
</gene>